<reference key="1">
    <citation type="journal article" date="2003" name="Nat. Genet.">
        <title>Comparative analysis of the genome sequences of Bordetella pertussis, Bordetella parapertussis and Bordetella bronchiseptica.</title>
        <authorList>
            <person name="Parkhill J."/>
            <person name="Sebaihia M."/>
            <person name="Preston A."/>
            <person name="Murphy L.D."/>
            <person name="Thomson N.R."/>
            <person name="Harris D.E."/>
            <person name="Holden M.T.G."/>
            <person name="Churcher C.M."/>
            <person name="Bentley S.D."/>
            <person name="Mungall K.L."/>
            <person name="Cerdeno-Tarraga A.-M."/>
            <person name="Temple L."/>
            <person name="James K.D."/>
            <person name="Harris B."/>
            <person name="Quail M.A."/>
            <person name="Achtman M."/>
            <person name="Atkin R."/>
            <person name="Baker S."/>
            <person name="Basham D."/>
            <person name="Bason N."/>
            <person name="Cherevach I."/>
            <person name="Chillingworth T."/>
            <person name="Collins M."/>
            <person name="Cronin A."/>
            <person name="Davis P."/>
            <person name="Doggett J."/>
            <person name="Feltwell T."/>
            <person name="Goble A."/>
            <person name="Hamlin N."/>
            <person name="Hauser H."/>
            <person name="Holroyd S."/>
            <person name="Jagels K."/>
            <person name="Leather S."/>
            <person name="Moule S."/>
            <person name="Norberczak H."/>
            <person name="O'Neil S."/>
            <person name="Ormond D."/>
            <person name="Price C."/>
            <person name="Rabbinowitsch E."/>
            <person name="Rutter S."/>
            <person name="Sanders M."/>
            <person name="Saunders D."/>
            <person name="Seeger K."/>
            <person name="Sharp S."/>
            <person name="Simmonds M."/>
            <person name="Skelton J."/>
            <person name="Squares R."/>
            <person name="Squares S."/>
            <person name="Stevens K."/>
            <person name="Unwin L."/>
            <person name="Whitehead S."/>
            <person name="Barrell B.G."/>
            <person name="Maskell D.J."/>
        </authorList>
    </citation>
    <scope>NUCLEOTIDE SEQUENCE [LARGE SCALE GENOMIC DNA]</scope>
    <source>
        <strain>12822 / ATCC BAA-587 / NCTC 13253</strain>
    </source>
</reference>
<keyword id="KW-0963">Cytoplasm</keyword>
<keyword id="KW-0269">Exonuclease</keyword>
<keyword id="KW-0378">Hydrolase</keyword>
<keyword id="KW-0540">Nuclease</keyword>
<proteinExistence type="inferred from homology"/>
<sequence>MAANENRLVWLDMEMTGLDPEKERIIEVAVVVTEADLTVVAEGPVLVVHQPDSLLDAMDNWNKSTHGKSGLIEKVKASTLGEAQAEQILLEFLAEHVPAGKSPLCGNTISQDRRFMYAYMPNLERFFHYRNLDVSTLKELARRWAPAVYKGFDKKSRHEALADIYESIDELKYYREHLLKV</sequence>
<evidence type="ECO:0000255" key="1">
    <source>
        <dbReference type="HAMAP-Rule" id="MF_00045"/>
    </source>
</evidence>
<dbReference type="EC" id="3.1.15.-" evidence="1"/>
<dbReference type="EMBL" id="BX640428">
    <property type="protein sequence ID" value="CAE36971.1"/>
    <property type="molecule type" value="Genomic_DNA"/>
</dbReference>
<dbReference type="RefSeq" id="WP_003813303.1">
    <property type="nucleotide sequence ID" value="NC_002928.3"/>
</dbReference>
<dbReference type="SMR" id="Q7W9T4"/>
<dbReference type="GeneID" id="93203429"/>
<dbReference type="KEGG" id="bpa:BPP1670"/>
<dbReference type="HOGENOM" id="CLU_064761_1_1_4"/>
<dbReference type="Proteomes" id="UP000001421">
    <property type="component" value="Chromosome"/>
</dbReference>
<dbReference type="GO" id="GO:0005737">
    <property type="term" value="C:cytoplasm"/>
    <property type="evidence" value="ECO:0007669"/>
    <property type="project" value="UniProtKB-SubCell"/>
</dbReference>
<dbReference type="GO" id="GO:0000175">
    <property type="term" value="F:3'-5'-RNA exonuclease activity"/>
    <property type="evidence" value="ECO:0007669"/>
    <property type="project" value="InterPro"/>
</dbReference>
<dbReference type="GO" id="GO:0003676">
    <property type="term" value="F:nucleic acid binding"/>
    <property type="evidence" value="ECO:0007669"/>
    <property type="project" value="InterPro"/>
</dbReference>
<dbReference type="GO" id="GO:0006259">
    <property type="term" value="P:DNA metabolic process"/>
    <property type="evidence" value="ECO:0007669"/>
    <property type="project" value="UniProtKB-ARBA"/>
</dbReference>
<dbReference type="CDD" id="cd06135">
    <property type="entry name" value="Orn"/>
    <property type="match status" value="1"/>
</dbReference>
<dbReference type="FunFam" id="3.30.420.10:FF:000003">
    <property type="entry name" value="Oligoribonuclease"/>
    <property type="match status" value="1"/>
</dbReference>
<dbReference type="Gene3D" id="3.30.420.10">
    <property type="entry name" value="Ribonuclease H-like superfamily/Ribonuclease H"/>
    <property type="match status" value="1"/>
</dbReference>
<dbReference type="HAMAP" id="MF_00045">
    <property type="entry name" value="Oligoribonuclease"/>
    <property type="match status" value="1"/>
</dbReference>
<dbReference type="InterPro" id="IPR013520">
    <property type="entry name" value="Exonuclease_RNaseT/DNA_pol3"/>
</dbReference>
<dbReference type="InterPro" id="IPR022894">
    <property type="entry name" value="Oligoribonuclease"/>
</dbReference>
<dbReference type="InterPro" id="IPR012337">
    <property type="entry name" value="RNaseH-like_sf"/>
</dbReference>
<dbReference type="InterPro" id="IPR036397">
    <property type="entry name" value="RNaseH_sf"/>
</dbReference>
<dbReference type="NCBIfam" id="NF003765">
    <property type="entry name" value="PRK05359.1"/>
    <property type="match status" value="1"/>
</dbReference>
<dbReference type="PANTHER" id="PTHR11046">
    <property type="entry name" value="OLIGORIBONUCLEASE, MITOCHONDRIAL"/>
    <property type="match status" value="1"/>
</dbReference>
<dbReference type="PANTHER" id="PTHR11046:SF0">
    <property type="entry name" value="OLIGORIBONUCLEASE, MITOCHONDRIAL"/>
    <property type="match status" value="1"/>
</dbReference>
<dbReference type="Pfam" id="PF00929">
    <property type="entry name" value="RNase_T"/>
    <property type="match status" value="1"/>
</dbReference>
<dbReference type="SMART" id="SM00479">
    <property type="entry name" value="EXOIII"/>
    <property type="match status" value="1"/>
</dbReference>
<dbReference type="SUPFAM" id="SSF53098">
    <property type="entry name" value="Ribonuclease H-like"/>
    <property type="match status" value="1"/>
</dbReference>
<accession>Q7W9T4</accession>
<comment type="function">
    <text evidence="1">3'-to-5' exoribonuclease specific for small oligoribonucleotides.</text>
</comment>
<comment type="subcellular location">
    <subcellularLocation>
        <location evidence="1">Cytoplasm</location>
    </subcellularLocation>
</comment>
<comment type="similarity">
    <text evidence="1">Belongs to the oligoribonuclease family.</text>
</comment>
<gene>
    <name evidence="1" type="primary">orn</name>
    <name type="ordered locus">BPP1670</name>
</gene>
<protein>
    <recommendedName>
        <fullName evidence="1">Oligoribonuclease</fullName>
        <ecNumber evidence="1">3.1.15.-</ecNumber>
    </recommendedName>
</protein>
<organism>
    <name type="scientific">Bordetella parapertussis (strain 12822 / ATCC BAA-587 / NCTC 13253)</name>
    <dbReference type="NCBI Taxonomy" id="257311"/>
    <lineage>
        <taxon>Bacteria</taxon>
        <taxon>Pseudomonadati</taxon>
        <taxon>Pseudomonadota</taxon>
        <taxon>Betaproteobacteria</taxon>
        <taxon>Burkholderiales</taxon>
        <taxon>Alcaligenaceae</taxon>
        <taxon>Bordetella</taxon>
    </lineage>
</organism>
<name>ORN_BORPA</name>
<feature type="chain" id="PRO_0000111020" description="Oligoribonuclease">
    <location>
        <begin position="1"/>
        <end position="181"/>
    </location>
</feature>
<feature type="domain" description="Exonuclease" evidence="1">
    <location>
        <begin position="8"/>
        <end position="171"/>
    </location>
</feature>
<feature type="active site" evidence="1">
    <location>
        <position position="129"/>
    </location>
</feature>